<organism>
    <name type="scientific">Campylobacter fetus subsp. fetus (strain 82-40)</name>
    <dbReference type="NCBI Taxonomy" id="360106"/>
    <lineage>
        <taxon>Bacteria</taxon>
        <taxon>Pseudomonadati</taxon>
        <taxon>Campylobacterota</taxon>
        <taxon>Epsilonproteobacteria</taxon>
        <taxon>Campylobacterales</taxon>
        <taxon>Campylobacteraceae</taxon>
        <taxon>Campylobacter</taxon>
    </lineage>
</organism>
<name>PAND_CAMFF</name>
<accession>A0RM41</accession>
<reference key="1">
    <citation type="submission" date="2006-11" db="EMBL/GenBank/DDBJ databases">
        <title>Sequence of Campylobacter fetus subsp. fetus 82-40.</title>
        <authorList>
            <person name="Fouts D.E."/>
            <person name="Nelson K.E."/>
        </authorList>
    </citation>
    <scope>NUCLEOTIDE SEQUENCE [LARGE SCALE GENOMIC DNA]</scope>
    <source>
        <strain>82-40</strain>
    </source>
</reference>
<evidence type="ECO:0000255" key="1">
    <source>
        <dbReference type="HAMAP-Rule" id="MF_00446"/>
    </source>
</evidence>
<proteinExistence type="inferred from homology"/>
<feature type="chain" id="PRO_0000306945" description="Aspartate 1-decarboxylase beta chain" evidence="1">
    <location>
        <begin position="1"/>
        <end position="24"/>
    </location>
</feature>
<feature type="chain" id="PRO_0000306946" description="Aspartate 1-decarboxylase alpha chain" evidence="1">
    <location>
        <begin position="25"/>
        <end position="115"/>
    </location>
</feature>
<feature type="active site" description="Schiff-base intermediate with substrate; via pyruvic acid" evidence="1">
    <location>
        <position position="25"/>
    </location>
</feature>
<feature type="active site" description="Proton donor" evidence="1">
    <location>
        <position position="58"/>
    </location>
</feature>
<feature type="binding site" evidence="1">
    <location>
        <position position="57"/>
    </location>
    <ligand>
        <name>substrate</name>
    </ligand>
</feature>
<feature type="binding site" evidence="1">
    <location>
        <begin position="72"/>
        <end position="74"/>
    </location>
    <ligand>
        <name>substrate</name>
    </ligand>
</feature>
<feature type="modified residue" description="Pyruvic acid (Ser)" evidence="1">
    <location>
        <position position="25"/>
    </location>
</feature>
<dbReference type="EC" id="4.1.1.11" evidence="1"/>
<dbReference type="EMBL" id="CP000487">
    <property type="protein sequence ID" value="ABK82082.1"/>
    <property type="molecule type" value="Genomic_DNA"/>
</dbReference>
<dbReference type="RefSeq" id="WP_002848041.1">
    <property type="nucleotide sequence ID" value="NC_008599.1"/>
</dbReference>
<dbReference type="SMR" id="A0RM41"/>
<dbReference type="GeneID" id="61063908"/>
<dbReference type="KEGG" id="cff:CFF8240_0064"/>
<dbReference type="eggNOG" id="COG0853">
    <property type="taxonomic scope" value="Bacteria"/>
</dbReference>
<dbReference type="HOGENOM" id="CLU_115305_2_0_7"/>
<dbReference type="UniPathway" id="UPA00028">
    <property type="reaction ID" value="UER00002"/>
</dbReference>
<dbReference type="Proteomes" id="UP000000760">
    <property type="component" value="Chromosome"/>
</dbReference>
<dbReference type="GO" id="GO:0005829">
    <property type="term" value="C:cytosol"/>
    <property type="evidence" value="ECO:0007669"/>
    <property type="project" value="TreeGrafter"/>
</dbReference>
<dbReference type="GO" id="GO:0004068">
    <property type="term" value="F:aspartate 1-decarboxylase activity"/>
    <property type="evidence" value="ECO:0007669"/>
    <property type="project" value="UniProtKB-UniRule"/>
</dbReference>
<dbReference type="GO" id="GO:0006523">
    <property type="term" value="P:alanine biosynthetic process"/>
    <property type="evidence" value="ECO:0007669"/>
    <property type="project" value="InterPro"/>
</dbReference>
<dbReference type="GO" id="GO:0015940">
    <property type="term" value="P:pantothenate biosynthetic process"/>
    <property type="evidence" value="ECO:0007669"/>
    <property type="project" value="UniProtKB-UniRule"/>
</dbReference>
<dbReference type="CDD" id="cd06919">
    <property type="entry name" value="Asp_decarbox"/>
    <property type="match status" value="1"/>
</dbReference>
<dbReference type="Gene3D" id="2.40.40.20">
    <property type="match status" value="1"/>
</dbReference>
<dbReference type="HAMAP" id="MF_00446">
    <property type="entry name" value="PanD"/>
    <property type="match status" value="1"/>
</dbReference>
<dbReference type="InterPro" id="IPR009010">
    <property type="entry name" value="Asp_de-COase-like_dom_sf"/>
</dbReference>
<dbReference type="InterPro" id="IPR003190">
    <property type="entry name" value="Asp_decarbox"/>
</dbReference>
<dbReference type="NCBIfam" id="TIGR00223">
    <property type="entry name" value="panD"/>
    <property type="match status" value="1"/>
</dbReference>
<dbReference type="PANTHER" id="PTHR21012">
    <property type="entry name" value="ASPARTATE 1-DECARBOXYLASE"/>
    <property type="match status" value="1"/>
</dbReference>
<dbReference type="PANTHER" id="PTHR21012:SF0">
    <property type="entry name" value="ASPARTATE 1-DECARBOXYLASE"/>
    <property type="match status" value="1"/>
</dbReference>
<dbReference type="Pfam" id="PF02261">
    <property type="entry name" value="Asp_decarbox"/>
    <property type="match status" value="1"/>
</dbReference>
<dbReference type="PIRSF" id="PIRSF006246">
    <property type="entry name" value="Asp_decarbox"/>
    <property type="match status" value="1"/>
</dbReference>
<dbReference type="SUPFAM" id="SSF50692">
    <property type="entry name" value="ADC-like"/>
    <property type="match status" value="1"/>
</dbReference>
<sequence length="115" mass="13017">MEIEMLYSKIHRATVTDANLNYVGSITIDERLMKAANLLEFQKVEILDINNGERFQTYVIKGEKKGEICLNGAAARKVCIGDIIIIVSYASMKRKKAKNFSPTIVHVNEKNEINE</sequence>
<protein>
    <recommendedName>
        <fullName evidence="1">Aspartate 1-decarboxylase</fullName>
        <ecNumber evidence="1">4.1.1.11</ecNumber>
    </recommendedName>
    <alternativeName>
        <fullName evidence="1">Aspartate alpha-decarboxylase</fullName>
    </alternativeName>
    <component>
        <recommendedName>
            <fullName evidence="1">Aspartate 1-decarboxylase beta chain</fullName>
        </recommendedName>
    </component>
    <component>
        <recommendedName>
            <fullName evidence="1">Aspartate 1-decarboxylase alpha chain</fullName>
        </recommendedName>
    </component>
</protein>
<keyword id="KW-0068">Autocatalytic cleavage</keyword>
<keyword id="KW-0963">Cytoplasm</keyword>
<keyword id="KW-0210">Decarboxylase</keyword>
<keyword id="KW-0456">Lyase</keyword>
<keyword id="KW-0566">Pantothenate biosynthesis</keyword>
<keyword id="KW-0670">Pyruvate</keyword>
<keyword id="KW-0704">Schiff base</keyword>
<keyword id="KW-0865">Zymogen</keyword>
<gene>
    <name evidence="1" type="primary">panD</name>
    <name type="ordered locus">CFF8240_0064</name>
</gene>
<comment type="function">
    <text evidence="1">Catalyzes the pyruvoyl-dependent decarboxylation of aspartate to produce beta-alanine.</text>
</comment>
<comment type="catalytic activity">
    <reaction evidence="1">
        <text>L-aspartate + H(+) = beta-alanine + CO2</text>
        <dbReference type="Rhea" id="RHEA:19497"/>
        <dbReference type="ChEBI" id="CHEBI:15378"/>
        <dbReference type="ChEBI" id="CHEBI:16526"/>
        <dbReference type="ChEBI" id="CHEBI:29991"/>
        <dbReference type="ChEBI" id="CHEBI:57966"/>
        <dbReference type="EC" id="4.1.1.11"/>
    </reaction>
</comment>
<comment type="cofactor">
    <cofactor evidence="1">
        <name>pyruvate</name>
        <dbReference type="ChEBI" id="CHEBI:15361"/>
    </cofactor>
    <text evidence="1">Binds 1 pyruvoyl group covalently per subunit.</text>
</comment>
<comment type="pathway">
    <text evidence="1">Cofactor biosynthesis; (R)-pantothenate biosynthesis; beta-alanine from L-aspartate: step 1/1.</text>
</comment>
<comment type="subunit">
    <text evidence="1">Heterooctamer of four alpha and four beta subunits.</text>
</comment>
<comment type="subcellular location">
    <subcellularLocation>
        <location evidence="1">Cytoplasm</location>
    </subcellularLocation>
</comment>
<comment type="PTM">
    <text evidence="1">Is synthesized initially as an inactive proenzyme, which is activated by self-cleavage at a specific serine bond to produce a beta-subunit with a hydroxyl group at its C-terminus and an alpha-subunit with a pyruvoyl group at its N-terminus.</text>
</comment>
<comment type="similarity">
    <text evidence="1">Belongs to the PanD family.</text>
</comment>